<accession>P48388</accession>
<evidence type="ECO:0000255" key="1">
    <source>
        <dbReference type="PROSITE-ProRule" id="PRU10023"/>
    </source>
</evidence>
<evidence type="ECO:0000305" key="2"/>
<reference key="1">
    <citation type="journal article" date="1994" name="Plant Cell Physiol.">
        <title>Chalcone synthase from Camellia sinensis: isolation of the cDNAs and the organ-specific and sugar-responsive expression of the genes.</title>
        <authorList>
            <person name="Takeuchi A."/>
            <person name="Matsumoto S."/>
            <person name="Hayatsu M."/>
        </authorList>
    </citation>
    <scope>NUCLEOTIDE SEQUENCE [MRNA]</scope>
    <source>
        <strain>cv. Yabukita</strain>
        <tissue>Leaf</tissue>
    </source>
</reference>
<dbReference type="EC" id="2.3.1.74"/>
<dbReference type="EMBL" id="D26595">
    <property type="protein sequence ID" value="BAA05642.1"/>
    <property type="molecule type" value="mRNA"/>
</dbReference>
<dbReference type="SMR" id="P48388"/>
<dbReference type="OrthoDB" id="1500228at2759"/>
<dbReference type="UniPathway" id="UPA00154"/>
<dbReference type="GO" id="GO:0016210">
    <property type="term" value="F:naringenin-chalcone synthase activity"/>
    <property type="evidence" value="ECO:0007669"/>
    <property type="project" value="UniProtKB-EC"/>
</dbReference>
<dbReference type="GO" id="GO:0009813">
    <property type="term" value="P:flavonoid biosynthetic process"/>
    <property type="evidence" value="ECO:0007669"/>
    <property type="project" value="UniProtKB-UniPathway"/>
</dbReference>
<dbReference type="GO" id="GO:0030639">
    <property type="term" value="P:polyketide biosynthetic process"/>
    <property type="evidence" value="ECO:0007669"/>
    <property type="project" value="TreeGrafter"/>
</dbReference>
<dbReference type="CDD" id="cd00831">
    <property type="entry name" value="CHS_like"/>
    <property type="match status" value="1"/>
</dbReference>
<dbReference type="FunFam" id="3.40.47.10:FF:000014">
    <property type="entry name" value="Chalcone synthase 1"/>
    <property type="match status" value="1"/>
</dbReference>
<dbReference type="FunFam" id="3.40.47.10:FF:000025">
    <property type="entry name" value="Chalcone synthase 2"/>
    <property type="match status" value="1"/>
</dbReference>
<dbReference type="Gene3D" id="3.40.47.10">
    <property type="match status" value="2"/>
</dbReference>
<dbReference type="InterPro" id="IPR012328">
    <property type="entry name" value="Chalcone/stilbene_synt_C"/>
</dbReference>
<dbReference type="InterPro" id="IPR001099">
    <property type="entry name" value="Chalcone/stilbene_synt_N"/>
</dbReference>
<dbReference type="InterPro" id="IPR018088">
    <property type="entry name" value="Chalcone/stilbene_synthase_AS"/>
</dbReference>
<dbReference type="InterPro" id="IPR011141">
    <property type="entry name" value="Polyketide_synthase_type-III"/>
</dbReference>
<dbReference type="InterPro" id="IPR016039">
    <property type="entry name" value="Thiolase-like"/>
</dbReference>
<dbReference type="PANTHER" id="PTHR11877:SF80">
    <property type="entry name" value="CHALCONE SYNTHASE 1"/>
    <property type="match status" value="1"/>
</dbReference>
<dbReference type="PANTHER" id="PTHR11877">
    <property type="entry name" value="HYDROXYMETHYLGLUTARYL-COA SYNTHASE"/>
    <property type="match status" value="1"/>
</dbReference>
<dbReference type="Pfam" id="PF02797">
    <property type="entry name" value="Chal_sti_synt_C"/>
    <property type="match status" value="1"/>
</dbReference>
<dbReference type="Pfam" id="PF00195">
    <property type="entry name" value="Chal_sti_synt_N"/>
    <property type="match status" value="1"/>
</dbReference>
<dbReference type="PIRSF" id="PIRSF000451">
    <property type="entry name" value="PKS_III"/>
    <property type="match status" value="1"/>
</dbReference>
<dbReference type="SUPFAM" id="SSF53901">
    <property type="entry name" value="Thiolase-like"/>
    <property type="match status" value="2"/>
</dbReference>
<dbReference type="PROSITE" id="PS00441">
    <property type="entry name" value="CHALCONE_SYNTH"/>
    <property type="match status" value="1"/>
</dbReference>
<name>CHS3_CAMSI</name>
<gene>
    <name type="primary">CHS3</name>
</gene>
<organism>
    <name type="scientific">Camellia sinensis</name>
    <name type="common">Tea plant</name>
    <name type="synonym">Thea sinensis</name>
    <dbReference type="NCBI Taxonomy" id="4442"/>
    <lineage>
        <taxon>Eukaryota</taxon>
        <taxon>Viridiplantae</taxon>
        <taxon>Streptophyta</taxon>
        <taxon>Embryophyta</taxon>
        <taxon>Tracheophyta</taxon>
        <taxon>Spermatophyta</taxon>
        <taxon>Magnoliopsida</taxon>
        <taxon>eudicotyledons</taxon>
        <taxon>Gunneridae</taxon>
        <taxon>Pentapetalae</taxon>
        <taxon>asterids</taxon>
        <taxon>Ericales</taxon>
        <taxon>Theaceae</taxon>
        <taxon>Camellia</taxon>
    </lineage>
</organism>
<protein>
    <recommendedName>
        <fullName>Chalcone synthase 3</fullName>
        <ecNumber>2.3.1.74</ecNumber>
    </recommendedName>
    <alternativeName>
        <fullName>Naringenin-chalcone synthase 3</fullName>
    </alternativeName>
</protein>
<sequence length="389" mass="42815">MVTVEDVWRAQRARGPATVLAIGTATPPNCVDQSTYPDYYFRITNSEHKVELKEKFKRMCDKSMIKKRYMYLTEEILKENPLVCEYMAPSLDARQDMVVVEVPKLGKEAATKAIKEWGQPKSKITHLVFCTTSGVDMPGADYQLTKLLGLRPSVKRLMMYQQGCFAGGTVLRLAKDLAENNKGARVLVVCSEITAVTFRGPSDTHLDSLVGQSLFGDGAAAIIIGSDPIPEVEKPLFELVSAAQTILPSSDGAIDGHLREVGLTFHLLKDVPRLISMNVEKSLVEAFQPLGISDWNSLFWIAHPGGPAILDQVELKLGLKEEKLRATRHVLSEYGNMSSACVLFILDEMRKKSAEEGLKTTGEGLEWGVLFGFGPGLTVETVVLHSLCT</sequence>
<proteinExistence type="evidence at transcript level"/>
<keyword id="KW-0012">Acyltransferase</keyword>
<keyword id="KW-0284">Flavonoid biosynthesis</keyword>
<keyword id="KW-0808">Transferase</keyword>
<comment type="function">
    <text>The primary product of this enzyme is 4,2',4',6'-tetrahydroxychalcone (also termed naringenin-chalcone or chalcone) which can under specific conditions spontaneously isomerize into naringenin.</text>
</comment>
<comment type="catalytic activity">
    <reaction evidence="1">
        <text>(E)-4-coumaroyl-CoA + 3 malonyl-CoA + 3 H(+) = 2',4,4',6'-tetrahydroxychalcone + 3 CO2 + 4 CoA</text>
        <dbReference type="Rhea" id="RHEA:11128"/>
        <dbReference type="ChEBI" id="CHEBI:15378"/>
        <dbReference type="ChEBI" id="CHEBI:15413"/>
        <dbReference type="ChEBI" id="CHEBI:16526"/>
        <dbReference type="ChEBI" id="CHEBI:57287"/>
        <dbReference type="ChEBI" id="CHEBI:57384"/>
        <dbReference type="ChEBI" id="CHEBI:85008"/>
        <dbReference type="EC" id="2.3.1.74"/>
    </reaction>
</comment>
<comment type="pathway">
    <text>Secondary metabolite biosynthesis; flavonoid biosynthesis.</text>
</comment>
<comment type="similarity">
    <text evidence="2">Belongs to the thiolase-like superfamily. Chalcone/stilbene synthases family.</text>
</comment>
<feature type="chain" id="PRO_0000215962" description="Chalcone synthase 3">
    <location>
        <begin position="1"/>
        <end position="389"/>
    </location>
</feature>
<feature type="active site" evidence="1">
    <location>
        <position position="164"/>
    </location>
</feature>